<protein>
    <recommendedName>
        <fullName evidence="1">DNA mismatch repair protein MutL</fullName>
    </recommendedName>
</protein>
<proteinExistence type="inferred from homology"/>
<feature type="chain" id="PRO_1000010065" description="DNA mismatch repair protein MutL">
    <location>
        <begin position="1"/>
        <end position="599"/>
    </location>
</feature>
<name>MUTL_RHOPB</name>
<dbReference type="EMBL" id="CP000301">
    <property type="protein sequence ID" value="ABD86951.1"/>
    <property type="molecule type" value="Genomic_DNA"/>
</dbReference>
<dbReference type="SMR" id="Q219I5"/>
<dbReference type="STRING" id="316056.RPC_1389"/>
<dbReference type="KEGG" id="rpc:RPC_1389"/>
<dbReference type="eggNOG" id="COG0323">
    <property type="taxonomic scope" value="Bacteria"/>
</dbReference>
<dbReference type="HOGENOM" id="CLU_004131_4_2_5"/>
<dbReference type="OrthoDB" id="9763467at2"/>
<dbReference type="GO" id="GO:0032300">
    <property type="term" value="C:mismatch repair complex"/>
    <property type="evidence" value="ECO:0007669"/>
    <property type="project" value="InterPro"/>
</dbReference>
<dbReference type="GO" id="GO:0005524">
    <property type="term" value="F:ATP binding"/>
    <property type="evidence" value="ECO:0007669"/>
    <property type="project" value="InterPro"/>
</dbReference>
<dbReference type="GO" id="GO:0016887">
    <property type="term" value="F:ATP hydrolysis activity"/>
    <property type="evidence" value="ECO:0007669"/>
    <property type="project" value="InterPro"/>
</dbReference>
<dbReference type="GO" id="GO:0140664">
    <property type="term" value="F:ATP-dependent DNA damage sensor activity"/>
    <property type="evidence" value="ECO:0007669"/>
    <property type="project" value="InterPro"/>
</dbReference>
<dbReference type="GO" id="GO:0030983">
    <property type="term" value="F:mismatched DNA binding"/>
    <property type="evidence" value="ECO:0007669"/>
    <property type="project" value="InterPro"/>
</dbReference>
<dbReference type="GO" id="GO:0006298">
    <property type="term" value="P:mismatch repair"/>
    <property type="evidence" value="ECO:0007669"/>
    <property type="project" value="UniProtKB-UniRule"/>
</dbReference>
<dbReference type="CDD" id="cd16926">
    <property type="entry name" value="HATPase_MutL-MLH-PMS-like"/>
    <property type="match status" value="1"/>
</dbReference>
<dbReference type="CDD" id="cd00782">
    <property type="entry name" value="MutL_Trans"/>
    <property type="match status" value="1"/>
</dbReference>
<dbReference type="FunFam" id="3.30.565.10:FF:000003">
    <property type="entry name" value="DNA mismatch repair endonuclease MutL"/>
    <property type="match status" value="1"/>
</dbReference>
<dbReference type="Gene3D" id="3.30.230.10">
    <property type="match status" value="1"/>
</dbReference>
<dbReference type="Gene3D" id="3.30.565.10">
    <property type="entry name" value="Histidine kinase-like ATPase, C-terminal domain"/>
    <property type="match status" value="1"/>
</dbReference>
<dbReference type="Gene3D" id="3.30.1540.20">
    <property type="entry name" value="MutL, C-terminal domain, dimerisation subdomain"/>
    <property type="match status" value="1"/>
</dbReference>
<dbReference type="Gene3D" id="3.30.1370.100">
    <property type="entry name" value="MutL, C-terminal domain, regulatory subdomain"/>
    <property type="match status" value="1"/>
</dbReference>
<dbReference type="HAMAP" id="MF_00149">
    <property type="entry name" value="DNA_mis_repair"/>
    <property type="match status" value="1"/>
</dbReference>
<dbReference type="InterPro" id="IPR014762">
    <property type="entry name" value="DNA_mismatch_repair_CS"/>
</dbReference>
<dbReference type="InterPro" id="IPR020667">
    <property type="entry name" value="DNA_mismatch_repair_MutL"/>
</dbReference>
<dbReference type="InterPro" id="IPR013507">
    <property type="entry name" value="DNA_mismatch_S5_2-like"/>
</dbReference>
<dbReference type="InterPro" id="IPR036890">
    <property type="entry name" value="HATPase_C_sf"/>
</dbReference>
<dbReference type="InterPro" id="IPR002099">
    <property type="entry name" value="MutL/Mlh/PMS"/>
</dbReference>
<dbReference type="InterPro" id="IPR038973">
    <property type="entry name" value="MutL/Mlh/Pms-like"/>
</dbReference>
<dbReference type="InterPro" id="IPR014790">
    <property type="entry name" value="MutL_C"/>
</dbReference>
<dbReference type="InterPro" id="IPR042120">
    <property type="entry name" value="MutL_C_dimsub"/>
</dbReference>
<dbReference type="InterPro" id="IPR042121">
    <property type="entry name" value="MutL_C_regsub"/>
</dbReference>
<dbReference type="InterPro" id="IPR037198">
    <property type="entry name" value="MutL_C_sf"/>
</dbReference>
<dbReference type="InterPro" id="IPR020568">
    <property type="entry name" value="Ribosomal_Su5_D2-typ_SF"/>
</dbReference>
<dbReference type="InterPro" id="IPR014721">
    <property type="entry name" value="Ribsml_uS5_D2-typ_fold_subgr"/>
</dbReference>
<dbReference type="NCBIfam" id="TIGR00585">
    <property type="entry name" value="mutl"/>
    <property type="match status" value="1"/>
</dbReference>
<dbReference type="NCBIfam" id="NF000953">
    <property type="entry name" value="PRK00095.2-4"/>
    <property type="match status" value="1"/>
</dbReference>
<dbReference type="PANTHER" id="PTHR10073">
    <property type="entry name" value="DNA MISMATCH REPAIR PROTEIN MLH, PMS, MUTL"/>
    <property type="match status" value="1"/>
</dbReference>
<dbReference type="PANTHER" id="PTHR10073:SF12">
    <property type="entry name" value="DNA MISMATCH REPAIR PROTEIN MLH1"/>
    <property type="match status" value="1"/>
</dbReference>
<dbReference type="Pfam" id="PF01119">
    <property type="entry name" value="DNA_mis_repair"/>
    <property type="match status" value="1"/>
</dbReference>
<dbReference type="Pfam" id="PF13589">
    <property type="entry name" value="HATPase_c_3"/>
    <property type="match status" value="1"/>
</dbReference>
<dbReference type="Pfam" id="PF08676">
    <property type="entry name" value="MutL_C"/>
    <property type="match status" value="1"/>
</dbReference>
<dbReference type="SMART" id="SM01340">
    <property type="entry name" value="DNA_mis_repair"/>
    <property type="match status" value="1"/>
</dbReference>
<dbReference type="SMART" id="SM00853">
    <property type="entry name" value="MutL_C"/>
    <property type="match status" value="1"/>
</dbReference>
<dbReference type="SUPFAM" id="SSF55874">
    <property type="entry name" value="ATPase domain of HSP90 chaperone/DNA topoisomerase II/histidine kinase"/>
    <property type="match status" value="1"/>
</dbReference>
<dbReference type="SUPFAM" id="SSF118116">
    <property type="entry name" value="DNA mismatch repair protein MutL"/>
    <property type="match status" value="1"/>
</dbReference>
<dbReference type="SUPFAM" id="SSF54211">
    <property type="entry name" value="Ribosomal protein S5 domain 2-like"/>
    <property type="match status" value="1"/>
</dbReference>
<dbReference type="PROSITE" id="PS00058">
    <property type="entry name" value="DNA_MISMATCH_REPAIR_1"/>
    <property type="match status" value="1"/>
</dbReference>
<accession>Q219I5</accession>
<gene>
    <name evidence="1" type="primary">mutL</name>
    <name type="ordered locus">RPC_1389</name>
</gene>
<organism>
    <name type="scientific">Rhodopseudomonas palustris (strain BisB18)</name>
    <dbReference type="NCBI Taxonomy" id="316056"/>
    <lineage>
        <taxon>Bacteria</taxon>
        <taxon>Pseudomonadati</taxon>
        <taxon>Pseudomonadota</taxon>
        <taxon>Alphaproteobacteria</taxon>
        <taxon>Hyphomicrobiales</taxon>
        <taxon>Nitrobacteraceae</taxon>
        <taxon>Rhodopseudomonas</taxon>
    </lineage>
</organism>
<sequence length="599" mass="64604">MPVRQLPETVVNRIAAGEVVERPASVVKELVENAIDAGASRIDIFTDGGGRRRIGITDDGAGMTHADLTLAVDRHATSKLDDEDLLAIRTLGFRGEALPSIGSVAKLSITTRHAAEPHAWALAVEGGAKSPIVPAALSHGTRVEVSDLFYATPARLKFLKTDRTEAEAIREVVRRLAMARPDIAFSMAGEERAPVTWAAALPGAAGRLTRLGDILGGDFRSNAIEVRSERDGVVVEGFAAAPSLTRANALGQYLFVNGRPVRDKLIIGAVRAAYSDYLPRDRHPVVALFVSLDSREVDANVHPAKTEVRFRDAGLVRALIVHALKEGLAREGKRTAANDAGATISSFRPSFAPRANWDWRSSPSYPVAGSAAFDAAAGFAEREQSGFDVGAPSADVRSYQPSADFTDRPLGAARTQIHQTYIVAQTRDGLVVVDQHAAHERLVYEKLKASLATNGVQRQILLIPEIVELDEATVERLVARGEELATFGLVVESFGPGAVAVRETPSLLGKTDAGALLRDLAEHMAEWDEALPLERRLLHVAATMACHGSVRAGRVLKPEEMNALLREMEDTPNSGQCNHGRPTYVELKLSDIEKLFGRR</sequence>
<keyword id="KW-0227">DNA damage</keyword>
<keyword id="KW-0234">DNA repair</keyword>
<comment type="function">
    <text evidence="1">This protein is involved in the repair of mismatches in DNA. It is required for dam-dependent methyl-directed DNA mismatch repair. May act as a 'molecular matchmaker', a protein that promotes the formation of a stable complex between two or more DNA-binding proteins in an ATP-dependent manner without itself being part of a final effector complex.</text>
</comment>
<comment type="similarity">
    <text evidence="1">Belongs to the DNA mismatch repair MutL/HexB family.</text>
</comment>
<evidence type="ECO:0000255" key="1">
    <source>
        <dbReference type="HAMAP-Rule" id="MF_00149"/>
    </source>
</evidence>
<reference key="1">
    <citation type="submission" date="2006-03" db="EMBL/GenBank/DDBJ databases">
        <title>Complete sequence of Rhodopseudomonas palustris BisB18.</title>
        <authorList>
            <consortium name="US DOE Joint Genome Institute"/>
            <person name="Copeland A."/>
            <person name="Lucas S."/>
            <person name="Lapidus A."/>
            <person name="Barry K."/>
            <person name="Detter J.C."/>
            <person name="Glavina del Rio T."/>
            <person name="Hammon N."/>
            <person name="Israni S."/>
            <person name="Dalin E."/>
            <person name="Tice H."/>
            <person name="Pitluck S."/>
            <person name="Chain P."/>
            <person name="Malfatti S."/>
            <person name="Shin M."/>
            <person name="Vergez L."/>
            <person name="Schmutz J."/>
            <person name="Larimer F."/>
            <person name="Land M."/>
            <person name="Hauser L."/>
            <person name="Pelletier D.A."/>
            <person name="Kyrpides N."/>
            <person name="Anderson I."/>
            <person name="Oda Y."/>
            <person name="Harwood C.S."/>
            <person name="Richardson P."/>
        </authorList>
    </citation>
    <scope>NUCLEOTIDE SEQUENCE [LARGE SCALE GENOMIC DNA]</scope>
    <source>
        <strain>BisB18</strain>
    </source>
</reference>